<accession>P9WFT8</accession>
<accession>L0TB17</accession>
<accession>O05814</accession>
<organism>
    <name type="scientific">Mycobacterium tuberculosis (strain CDC 1551 / Oshkosh)</name>
    <dbReference type="NCBI Taxonomy" id="83331"/>
    <lineage>
        <taxon>Bacteria</taxon>
        <taxon>Bacillati</taxon>
        <taxon>Actinomycetota</taxon>
        <taxon>Actinomycetes</taxon>
        <taxon>Mycobacteriales</taxon>
        <taxon>Mycobacteriaceae</taxon>
        <taxon>Mycobacterium</taxon>
        <taxon>Mycobacterium tuberculosis complex</taxon>
    </lineage>
</organism>
<dbReference type="EC" id="6.1.1.15" evidence="1"/>
<dbReference type="EMBL" id="AE000516">
    <property type="protein sequence ID" value="AAK47237.1"/>
    <property type="status" value="ALT_INIT"/>
    <property type="molecule type" value="Genomic_DNA"/>
</dbReference>
<dbReference type="PIR" id="H70588">
    <property type="entry name" value="H70588"/>
</dbReference>
<dbReference type="RefSeq" id="WP_003899508.1">
    <property type="nucleotide sequence ID" value="NZ_KK341227.1"/>
</dbReference>
<dbReference type="SMR" id="P9WFT8"/>
<dbReference type="KEGG" id="mtc:MT2911"/>
<dbReference type="PATRIC" id="fig|83331.31.peg.3145"/>
<dbReference type="HOGENOM" id="CLU_016739_0_0_11"/>
<dbReference type="Proteomes" id="UP000001020">
    <property type="component" value="Chromosome"/>
</dbReference>
<dbReference type="GO" id="GO:0005829">
    <property type="term" value="C:cytosol"/>
    <property type="evidence" value="ECO:0007669"/>
    <property type="project" value="TreeGrafter"/>
</dbReference>
<dbReference type="GO" id="GO:0002161">
    <property type="term" value="F:aminoacyl-tRNA deacylase activity"/>
    <property type="evidence" value="ECO:0007669"/>
    <property type="project" value="InterPro"/>
</dbReference>
<dbReference type="GO" id="GO:0005524">
    <property type="term" value="F:ATP binding"/>
    <property type="evidence" value="ECO:0007669"/>
    <property type="project" value="UniProtKB-UniRule"/>
</dbReference>
<dbReference type="GO" id="GO:0004827">
    <property type="term" value="F:proline-tRNA ligase activity"/>
    <property type="evidence" value="ECO:0007669"/>
    <property type="project" value="UniProtKB-UniRule"/>
</dbReference>
<dbReference type="GO" id="GO:0006433">
    <property type="term" value="P:prolyl-tRNA aminoacylation"/>
    <property type="evidence" value="ECO:0007669"/>
    <property type="project" value="UniProtKB-UniRule"/>
</dbReference>
<dbReference type="CDD" id="cd00861">
    <property type="entry name" value="ProRS_anticodon_short"/>
    <property type="match status" value="1"/>
</dbReference>
<dbReference type="CDD" id="cd00779">
    <property type="entry name" value="ProRS_core_prok"/>
    <property type="match status" value="1"/>
</dbReference>
<dbReference type="FunFam" id="3.30.930.10:FF:000070">
    <property type="entry name" value="Proline--tRNA ligase"/>
    <property type="match status" value="1"/>
</dbReference>
<dbReference type="FunFam" id="3.30.930.10:FF:000120">
    <property type="entry name" value="Proline--tRNA ligase"/>
    <property type="match status" value="1"/>
</dbReference>
<dbReference type="FunFam" id="3.40.50.800:FF:000024">
    <property type="entry name" value="Proline--tRNA ligase"/>
    <property type="match status" value="1"/>
</dbReference>
<dbReference type="FunFam" id="3.90.960.10:FF:000008">
    <property type="entry name" value="Proline--tRNA ligase"/>
    <property type="match status" value="1"/>
</dbReference>
<dbReference type="Gene3D" id="3.40.50.800">
    <property type="entry name" value="Anticodon-binding domain"/>
    <property type="match status" value="1"/>
</dbReference>
<dbReference type="Gene3D" id="3.30.930.10">
    <property type="entry name" value="Bira Bifunctional Protein, Domain 2"/>
    <property type="match status" value="2"/>
</dbReference>
<dbReference type="Gene3D" id="3.90.960.10">
    <property type="entry name" value="YbaK/aminoacyl-tRNA synthetase-associated domain"/>
    <property type="match status" value="1"/>
</dbReference>
<dbReference type="HAMAP" id="MF_01569">
    <property type="entry name" value="Pro_tRNA_synth_type1"/>
    <property type="match status" value="1"/>
</dbReference>
<dbReference type="InterPro" id="IPR002314">
    <property type="entry name" value="aa-tRNA-synt_IIb"/>
</dbReference>
<dbReference type="InterPro" id="IPR006195">
    <property type="entry name" value="aa-tRNA-synth_II"/>
</dbReference>
<dbReference type="InterPro" id="IPR045864">
    <property type="entry name" value="aa-tRNA-synth_II/BPL/LPL"/>
</dbReference>
<dbReference type="InterPro" id="IPR004154">
    <property type="entry name" value="Anticodon-bd"/>
</dbReference>
<dbReference type="InterPro" id="IPR036621">
    <property type="entry name" value="Anticodon-bd_dom_sf"/>
</dbReference>
<dbReference type="InterPro" id="IPR002316">
    <property type="entry name" value="Pro-tRNA-ligase_IIa"/>
</dbReference>
<dbReference type="InterPro" id="IPR004500">
    <property type="entry name" value="Pro-tRNA-synth_IIa_bac-type"/>
</dbReference>
<dbReference type="InterPro" id="IPR023717">
    <property type="entry name" value="Pro-tRNA-Synthase_IIa_type1"/>
</dbReference>
<dbReference type="InterPro" id="IPR050062">
    <property type="entry name" value="Pro-tRNA_synthetase"/>
</dbReference>
<dbReference type="InterPro" id="IPR044140">
    <property type="entry name" value="ProRS_anticodon_short"/>
</dbReference>
<dbReference type="InterPro" id="IPR033730">
    <property type="entry name" value="ProRS_core_prok"/>
</dbReference>
<dbReference type="InterPro" id="IPR036754">
    <property type="entry name" value="YbaK/aa-tRNA-synt-asso_dom_sf"/>
</dbReference>
<dbReference type="InterPro" id="IPR007214">
    <property type="entry name" value="YbaK/aa-tRNA-synth-assoc-dom"/>
</dbReference>
<dbReference type="NCBIfam" id="NF006625">
    <property type="entry name" value="PRK09194.1"/>
    <property type="match status" value="1"/>
</dbReference>
<dbReference type="NCBIfam" id="TIGR00409">
    <property type="entry name" value="proS_fam_II"/>
    <property type="match status" value="1"/>
</dbReference>
<dbReference type="PANTHER" id="PTHR42753">
    <property type="entry name" value="MITOCHONDRIAL RIBOSOME PROTEIN L39/PROLYL-TRNA LIGASE FAMILY MEMBER"/>
    <property type="match status" value="1"/>
</dbReference>
<dbReference type="PANTHER" id="PTHR42753:SF2">
    <property type="entry name" value="PROLINE--TRNA LIGASE"/>
    <property type="match status" value="1"/>
</dbReference>
<dbReference type="Pfam" id="PF03129">
    <property type="entry name" value="HGTP_anticodon"/>
    <property type="match status" value="1"/>
</dbReference>
<dbReference type="Pfam" id="PF00587">
    <property type="entry name" value="tRNA-synt_2b"/>
    <property type="match status" value="1"/>
</dbReference>
<dbReference type="Pfam" id="PF04073">
    <property type="entry name" value="tRNA_edit"/>
    <property type="match status" value="1"/>
</dbReference>
<dbReference type="PRINTS" id="PR01046">
    <property type="entry name" value="TRNASYNTHPRO"/>
</dbReference>
<dbReference type="SUPFAM" id="SSF52954">
    <property type="entry name" value="Class II aaRS ABD-related"/>
    <property type="match status" value="1"/>
</dbReference>
<dbReference type="SUPFAM" id="SSF55681">
    <property type="entry name" value="Class II aaRS and biotin synthetases"/>
    <property type="match status" value="1"/>
</dbReference>
<dbReference type="SUPFAM" id="SSF55826">
    <property type="entry name" value="YbaK/ProRS associated domain"/>
    <property type="match status" value="1"/>
</dbReference>
<dbReference type="PROSITE" id="PS50862">
    <property type="entry name" value="AA_TRNA_LIGASE_II"/>
    <property type="match status" value="1"/>
</dbReference>
<comment type="function">
    <text evidence="1">Catalyzes the attachment of proline to tRNA(Pro) in a two-step reaction: proline is first activated by ATP to form Pro-AMP and then transferred to the acceptor end of tRNA(Pro). As ProRS can inadvertently accommodate and process non-cognate amino acids such as alanine and cysteine, to avoid such errors it has two additional distinct editing activities against alanine. One activity is designated as 'pretransfer' editing and involves the tRNA(Pro)-independent hydrolysis of activated Ala-AMP. The other activity is designated 'posttransfer' editing and involves deacylation of mischarged Ala-tRNA(Pro). The misacylated Cys-tRNA(Pro) is not edited by ProRS.</text>
</comment>
<comment type="catalytic activity">
    <reaction evidence="1">
        <text>tRNA(Pro) + L-proline + ATP = L-prolyl-tRNA(Pro) + AMP + diphosphate</text>
        <dbReference type="Rhea" id="RHEA:14305"/>
        <dbReference type="Rhea" id="RHEA-COMP:9700"/>
        <dbReference type="Rhea" id="RHEA-COMP:9702"/>
        <dbReference type="ChEBI" id="CHEBI:30616"/>
        <dbReference type="ChEBI" id="CHEBI:33019"/>
        <dbReference type="ChEBI" id="CHEBI:60039"/>
        <dbReference type="ChEBI" id="CHEBI:78442"/>
        <dbReference type="ChEBI" id="CHEBI:78532"/>
        <dbReference type="ChEBI" id="CHEBI:456215"/>
        <dbReference type="EC" id="6.1.1.15"/>
    </reaction>
</comment>
<comment type="subunit">
    <text evidence="1">Homodimer.</text>
</comment>
<comment type="subcellular location">
    <subcellularLocation>
        <location evidence="1">Cytoplasm</location>
    </subcellularLocation>
</comment>
<comment type="domain">
    <text evidence="1">Consists of three domains: the N-terminal catalytic domain, the editing domain and the C-terminal anticodon-binding domain.</text>
</comment>
<comment type="similarity">
    <text evidence="1">Belongs to the class-II aminoacyl-tRNA synthetase family. ProS type 1 subfamily.</text>
</comment>
<comment type="sequence caution" evidence="2">
    <conflict type="erroneous initiation">
        <sequence resource="EMBL-CDS" id="AAK47237"/>
    </conflict>
</comment>
<gene>
    <name evidence="1" type="primary">proS</name>
    <name type="ordered locus">MT2911</name>
</gene>
<proteinExistence type="inferred from homology"/>
<protein>
    <recommendedName>
        <fullName evidence="1">Proline--tRNA ligase</fullName>
        <ecNumber evidence="1">6.1.1.15</ecNumber>
    </recommendedName>
    <alternativeName>
        <fullName evidence="1">Prolyl-tRNA synthetase</fullName>
        <shortName evidence="1">ProRS</shortName>
    </alternativeName>
</protein>
<reference key="1">
    <citation type="journal article" date="2002" name="J. Bacteriol.">
        <title>Whole-genome comparison of Mycobacterium tuberculosis clinical and laboratory strains.</title>
        <authorList>
            <person name="Fleischmann R.D."/>
            <person name="Alland D."/>
            <person name="Eisen J.A."/>
            <person name="Carpenter L."/>
            <person name="White O."/>
            <person name="Peterson J.D."/>
            <person name="DeBoy R.T."/>
            <person name="Dodson R.J."/>
            <person name="Gwinn M.L."/>
            <person name="Haft D.H."/>
            <person name="Hickey E.K."/>
            <person name="Kolonay J.F."/>
            <person name="Nelson W.C."/>
            <person name="Umayam L.A."/>
            <person name="Ermolaeva M.D."/>
            <person name="Salzberg S.L."/>
            <person name="Delcher A."/>
            <person name="Utterback T.R."/>
            <person name="Weidman J.F."/>
            <person name="Khouri H.M."/>
            <person name="Gill J."/>
            <person name="Mikula A."/>
            <person name="Bishai W."/>
            <person name="Jacobs W.R. Jr."/>
            <person name="Venter J.C."/>
            <person name="Fraser C.M."/>
        </authorList>
    </citation>
    <scope>NUCLEOTIDE SEQUENCE [LARGE SCALE GENOMIC DNA]</scope>
    <source>
        <strain>CDC 1551 / Oshkosh</strain>
    </source>
</reference>
<feature type="chain" id="PRO_0000428479" description="Proline--tRNA ligase">
    <location>
        <begin position="1"/>
        <end position="582"/>
    </location>
</feature>
<sequence length="582" mass="63302">MITRMSELFLRTLRDDPADAEVASHKLLIRAGYIRPVAPGLYSWLPLGLRVLRNIERVIRDEMNAIGGQEILFPALLPRAPYETTNRWTQYGDSVFRLKDRRGNDYLLGPTHEELFTLTVKGEYSSYKDFPLTLYQIQTKYRDEARPRAGILRAREFVMKDSYSFDIDAAGLKAAYHAHREAYQRIFDRLQVRYVIVSAVSGAMGGSASEEFLAESPSGEDAFVRCLESGYAANVEAVVTARPDTLPIDGLPEAVVHDTGDTPTIASLVAWANEADLGRTVTAADTLKNVLIKVRQPGGDTELLAIGVPGDREVDDKRLGAALEPADYALLDDDDFAKHPFLVKGYIGPKALRENNVRYLVDPRIVDGTSWITGADQPGRHVVGLVAGRDFTADGTIEAAEVREGDPSPDGAGPLVMARGIEIGHIFQLGSKYTDAFTADVLGEDGKPVRLTMGSYGIGVSRLVAVVAEQHHDELGLRWPSTVAPFDVHLVIANKDAQARAGATALAADLDRLGVEVLLDDRQASPGVKFKDAELLGMPWIVVVGRGWADGVVELRDRFSGQTRELVAGASLATDIAAAVTG</sequence>
<evidence type="ECO:0000255" key="1">
    <source>
        <dbReference type="HAMAP-Rule" id="MF_01569"/>
    </source>
</evidence>
<evidence type="ECO:0000305" key="2"/>
<keyword id="KW-0030">Aminoacyl-tRNA synthetase</keyword>
<keyword id="KW-0067">ATP-binding</keyword>
<keyword id="KW-0963">Cytoplasm</keyword>
<keyword id="KW-0436">Ligase</keyword>
<keyword id="KW-0547">Nucleotide-binding</keyword>
<keyword id="KW-0648">Protein biosynthesis</keyword>
<keyword id="KW-1185">Reference proteome</keyword>
<name>SYP_MYCTO</name>